<reference key="1">
    <citation type="submission" date="2007-08" db="EMBL/GenBank/DDBJ databases">
        <title>Comparing putative pathogenicity factors between T. tonsurans and T. equinum.</title>
        <authorList>
            <person name="Brown J.T."/>
            <person name="Preuett B.L."/>
            <person name="Abdel-Rahman S.M."/>
        </authorList>
    </citation>
    <scope>NUCLEOTIDE SEQUENCE [GENOMIC DNA]</scope>
</reference>
<sequence>MKFLSLLLLAGIAQAIVPPREPRPPTGGGNKLLTYKECVPRATISPRSTSLAWINSDEDGQYISQSDDGALILQNIVTNTNKTLVAADKVPKGYYDYWFKPDLSAVLWATNYTKQYRHSYFANYFILDIEKGSLTPLAQDQAGDIQYAQWSPVDNSIAYVRGNDLYIWNNGTTKRTTENGGPDIFNGVPDWVYEEEIFGDRFALWFSPDGEYLAYLRFNETGVPTYTIPYYKNKQKIAPAYPRELEIRYPKVSAKNPTVQFHLLNIASSQESTIPVTAFPENDLVIGEVAWLSSGHDSVAYRAFNRVQDREKIVSIKVESKESKVIRERDGTDGWIDNLLSMSYIGDVNGKEYYVDISDASGWAHIYLYPVDGGKEIALTKGEWEVVAILKVDTKKKLIYFTSTKYHSTTRHVYSVSYDTNVMTPLVNDKEAAYYTASFSAKGGYYILSYQGPNVPYQELYSTKDSKKPLKTITSNDALLEKLKEYKLPKVSFFEIKLPSGETLNVKQRLPPNFNPHKKYPVLFTPYGGPGAQEVSQAWNSLDFKSYITSDPELEYVTWTVDNRGTGYKGRKFRSAVAKRLGFLEAQDQVFAAKELLKNRWADKDHIGIWGWSYGGFLTAKTLETDSGVFTFGISTAPVSDFRLYDSMYTERYMKTVELNADGYSETAVHKVDGFKNLKGHYLIQHGTGDDNVHFQNAAVLSNTLMNGGVTADKLTTQWFTDSDHGIRYDMDSTYQYKQLAKMVYDQKQRRPERPPMHQWSKRVLAALFGERAEE</sequence>
<feature type="signal peptide" evidence="2">
    <location>
        <begin position="1"/>
        <end position="15"/>
    </location>
</feature>
<feature type="chain" id="PRO_0000384088" description="Dipeptidyl peptidase 4">
    <location>
        <begin position="16"/>
        <end position="775"/>
    </location>
</feature>
<feature type="active site" description="Charge relay system" evidence="3">
    <location>
        <position position="613"/>
    </location>
</feature>
<feature type="active site" description="Charge relay system" evidence="3">
    <location>
        <position position="690"/>
    </location>
</feature>
<feature type="active site" description="Charge relay system" evidence="3">
    <location>
        <position position="725"/>
    </location>
</feature>
<feature type="glycosylation site" description="N-linked (GlcNAc...) asparagine" evidence="2">
    <location>
        <position position="81"/>
    </location>
</feature>
<feature type="glycosylation site" description="N-linked (GlcNAc...) asparagine" evidence="2">
    <location>
        <position position="111"/>
    </location>
</feature>
<feature type="glycosylation site" description="N-linked (GlcNAc...) asparagine" evidence="2">
    <location>
        <position position="170"/>
    </location>
</feature>
<feature type="glycosylation site" description="N-linked (GlcNAc...) asparagine" evidence="2">
    <location>
        <position position="219"/>
    </location>
</feature>
<evidence type="ECO:0000250" key="1"/>
<evidence type="ECO:0000255" key="2"/>
<evidence type="ECO:0000255" key="3">
    <source>
        <dbReference type="PROSITE-ProRule" id="PRU10084"/>
    </source>
</evidence>
<evidence type="ECO:0000305" key="4"/>
<organism>
    <name type="scientific">Trichophyton equinum</name>
    <name type="common">Horse ringworm fungus</name>
    <dbReference type="NCBI Taxonomy" id="63418"/>
    <lineage>
        <taxon>Eukaryota</taxon>
        <taxon>Fungi</taxon>
        <taxon>Dikarya</taxon>
        <taxon>Ascomycota</taxon>
        <taxon>Pezizomycotina</taxon>
        <taxon>Eurotiomycetes</taxon>
        <taxon>Eurotiomycetidae</taxon>
        <taxon>Onygenales</taxon>
        <taxon>Arthrodermataceae</taxon>
        <taxon>Trichophyton</taxon>
    </lineage>
</organism>
<proteinExistence type="inferred from homology"/>
<protein>
    <recommendedName>
        <fullName>Dipeptidyl peptidase 4</fullName>
        <ecNumber>3.4.14.5</ecNumber>
    </recommendedName>
    <alternativeName>
        <fullName>Dipeptidyl peptidase IV</fullName>
        <shortName>DPP IV</shortName>
        <shortName>DppIV</shortName>
    </alternativeName>
</protein>
<comment type="function">
    <text evidence="1">Extracellular dipeptidyl-peptidase which removes N-terminal dipeptides sequentially from polypeptides having unsubstituted N-termini provided that the penultimate residue is proline. Contributes to pathogenicity (By similarity).</text>
</comment>
<comment type="catalytic activity">
    <reaction evidence="3">
        <text>Release of an N-terminal dipeptide, Xaa-Yaa-|-Zaa-, from a polypeptide, preferentially when Yaa is Pro, provided Zaa is neither Pro nor hydroxyproline.</text>
        <dbReference type="EC" id="3.4.14.5"/>
    </reaction>
</comment>
<comment type="subcellular location">
    <subcellularLocation>
        <location evidence="1">Secreted</location>
    </subcellularLocation>
</comment>
<comment type="similarity">
    <text evidence="4">Belongs to the peptidase S9B family.</text>
</comment>
<gene>
    <name type="primary">DPP4</name>
</gene>
<accession>A7UKV8</accession>
<keyword id="KW-0031">Aminopeptidase</keyword>
<keyword id="KW-0325">Glycoprotein</keyword>
<keyword id="KW-0378">Hydrolase</keyword>
<keyword id="KW-0645">Protease</keyword>
<keyword id="KW-0964">Secreted</keyword>
<keyword id="KW-0720">Serine protease</keyword>
<keyword id="KW-0732">Signal</keyword>
<keyword id="KW-0843">Virulence</keyword>
<dbReference type="EC" id="3.4.14.5"/>
<dbReference type="EMBL" id="EU076573">
    <property type="protein sequence ID" value="ABU50383.1"/>
    <property type="molecule type" value="Genomic_DNA"/>
</dbReference>
<dbReference type="SMR" id="A7UKV8"/>
<dbReference type="ESTHER" id="artbc-dpp4">
    <property type="family name" value="DPP4N_Peptidase_S9"/>
</dbReference>
<dbReference type="MEROPS" id="S09.008"/>
<dbReference type="GlyCosmos" id="A7UKV8">
    <property type="glycosylation" value="4 sites, No reported glycans"/>
</dbReference>
<dbReference type="VEuPathDB" id="FungiDB:TEQG_07662"/>
<dbReference type="GO" id="GO:0005576">
    <property type="term" value="C:extracellular region"/>
    <property type="evidence" value="ECO:0007669"/>
    <property type="project" value="UniProtKB-SubCell"/>
</dbReference>
<dbReference type="GO" id="GO:0005886">
    <property type="term" value="C:plasma membrane"/>
    <property type="evidence" value="ECO:0007669"/>
    <property type="project" value="TreeGrafter"/>
</dbReference>
<dbReference type="GO" id="GO:0004177">
    <property type="term" value="F:aminopeptidase activity"/>
    <property type="evidence" value="ECO:0007669"/>
    <property type="project" value="UniProtKB-KW"/>
</dbReference>
<dbReference type="GO" id="GO:0008239">
    <property type="term" value="F:dipeptidyl-peptidase activity"/>
    <property type="evidence" value="ECO:0007669"/>
    <property type="project" value="UniProtKB-EC"/>
</dbReference>
<dbReference type="GO" id="GO:0004252">
    <property type="term" value="F:serine-type endopeptidase activity"/>
    <property type="evidence" value="ECO:0007669"/>
    <property type="project" value="InterPro"/>
</dbReference>
<dbReference type="GO" id="GO:0006508">
    <property type="term" value="P:proteolysis"/>
    <property type="evidence" value="ECO:0007669"/>
    <property type="project" value="UniProtKB-KW"/>
</dbReference>
<dbReference type="FunFam" id="3.40.50.1820:FF:000003">
    <property type="entry name" value="Dipeptidyl peptidase 4"/>
    <property type="match status" value="1"/>
</dbReference>
<dbReference type="FunFam" id="2.140.10.30:FF:000003">
    <property type="entry name" value="Probable dipeptidyl peptidase 4"/>
    <property type="match status" value="1"/>
</dbReference>
<dbReference type="Gene3D" id="3.40.50.1820">
    <property type="entry name" value="alpha/beta hydrolase"/>
    <property type="match status" value="1"/>
</dbReference>
<dbReference type="Gene3D" id="2.140.10.30">
    <property type="entry name" value="Dipeptidylpeptidase IV, N-terminal domain"/>
    <property type="match status" value="1"/>
</dbReference>
<dbReference type="InterPro" id="IPR029058">
    <property type="entry name" value="AB_hydrolase_fold"/>
</dbReference>
<dbReference type="InterPro" id="IPR002471">
    <property type="entry name" value="Pept_S9_AS"/>
</dbReference>
<dbReference type="InterPro" id="IPR001375">
    <property type="entry name" value="Peptidase_S9_cat"/>
</dbReference>
<dbReference type="InterPro" id="IPR002469">
    <property type="entry name" value="Peptidase_S9B_N"/>
</dbReference>
<dbReference type="InterPro" id="IPR050278">
    <property type="entry name" value="Serine_Prot_S9B/DPPIV"/>
</dbReference>
<dbReference type="PANTHER" id="PTHR11731:SF162">
    <property type="entry name" value="DIPEPTIDYL PEPTIDASE 4-RELATED"/>
    <property type="match status" value="1"/>
</dbReference>
<dbReference type="PANTHER" id="PTHR11731">
    <property type="entry name" value="PROTEASE FAMILY S9B,C DIPEPTIDYL-PEPTIDASE IV-RELATED"/>
    <property type="match status" value="1"/>
</dbReference>
<dbReference type="Pfam" id="PF00930">
    <property type="entry name" value="DPPIV_N"/>
    <property type="match status" value="1"/>
</dbReference>
<dbReference type="Pfam" id="PF00326">
    <property type="entry name" value="Peptidase_S9"/>
    <property type="match status" value="1"/>
</dbReference>
<dbReference type="SUPFAM" id="SSF53474">
    <property type="entry name" value="alpha/beta-Hydrolases"/>
    <property type="match status" value="1"/>
</dbReference>
<dbReference type="SUPFAM" id="SSF82171">
    <property type="entry name" value="DPP6 N-terminal domain-like"/>
    <property type="match status" value="1"/>
</dbReference>
<dbReference type="PROSITE" id="PS00708">
    <property type="entry name" value="PRO_ENDOPEP_SER"/>
    <property type="match status" value="1"/>
</dbReference>
<name>DPP4_TRIEQ</name>